<keyword id="KW-0238">DNA-binding</keyword>
<keyword id="KW-1017">Isopeptide bond</keyword>
<keyword id="KW-0479">Metal-binding</keyword>
<keyword id="KW-0488">Methylation</keyword>
<keyword id="KW-0539">Nucleus</keyword>
<keyword id="KW-0597">Phosphoprotein</keyword>
<keyword id="KW-1185">Reference proteome</keyword>
<keyword id="KW-0677">Repeat</keyword>
<keyword id="KW-0694">RNA-binding</keyword>
<keyword id="KW-0832">Ubl conjugation</keyword>
<keyword id="KW-0862">Zinc</keyword>
<keyword id="KW-0863">Zinc-finger</keyword>
<reference key="1">
    <citation type="journal article" date="2003" name="Dev. Dyn.">
        <title>Mouse pigpen encodes a nuclear protein whose expression is developmentally regulated during craniofacial morphogenesis.</title>
        <authorList>
            <person name="Alappat S.R."/>
            <person name="Zhang M."/>
            <person name="Zhao X."/>
            <person name="Alliegro M.A."/>
            <person name="Alliegro M.C."/>
            <person name="Burdsal C.A."/>
        </authorList>
    </citation>
    <scope>NUCLEOTIDE SEQUENCE [MRNA]</scope>
</reference>
<reference key="2">
    <citation type="journal article" date="2005" name="J. Cell Sci.">
        <title>TLS facilitates transport of mRNA encoding an actin-stabilizing protein to dendritic spines.</title>
        <authorList>
            <person name="Fujii R."/>
            <person name="Takumi T."/>
        </authorList>
    </citation>
    <scope>FUNCTION</scope>
    <scope>RNA-BINDING</scope>
</reference>
<reference key="3">
    <citation type="journal article" date="2010" name="Cell">
        <title>A tissue-specific atlas of mouse protein phosphorylation and expression.</title>
        <authorList>
            <person name="Huttlin E.L."/>
            <person name="Jedrychowski M.P."/>
            <person name="Elias J.E."/>
            <person name="Goswami T."/>
            <person name="Rad R."/>
            <person name="Beausoleil S.A."/>
            <person name="Villen J."/>
            <person name="Haas W."/>
            <person name="Sowa M.E."/>
            <person name="Gygi S.P."/>
        </authorList>
    </citation>
    <scope>IDENTIFICATION BY MASS SPECTROMETRY [LARGE SCALE ANALYSIS]</scope>
    <source>
        <tissue>Brain</tissue>
        <tissue>Heart</tissue>
        <tissue>Kidney</tissue>
        <tissue>Lung</tissue>
        <tissue>Pancreas</tissue>
        <tissue>Spleen</tissue>
        <tissue>Testis</tissue>
    </source>
</reference>
<reference key="4">
    <citation type="journal article" date="2014" name="Mol. Cell. Proteomics">
        <title>Immunoaffinity enrichment and mass spectrometry analysis of protein methylation.</title>
        <authorList>
            <person name="Guo A."/>
            <person name="Gu H."/>
            <person name="Zhou J."/>
            <person name="Mulhern D."/>
            <person name="Wang Y."/>
            <person name="Lee K.A."/>
            <person name="Yang V."/>
            <person name="Aguiar M."/>
            <person name="Kornhauser J."/>
            <person name="Jia X."/>
            <person name="Ren J."/>
            <person name="Beausoleil S.A."/>
            <person name="Silva J.C."/>
            <person name="Vemulapalli V."/>
            <person name="Bedford M.T."/>
            <person name="Comb M.J."/>
        </authorList>
    </citation>
    <scope>METHYLATION [LARGE SCALE ANALYSIS] AT ARG-387 AND ARG-400</scope>
    <scope>IDENTIFICATION BY MASS SPECTROMETRY [LARGE SCALE ANALYSIS]</scope>
    <source>
        <tissue>Brain</tissue>
        <tissue>Embryo</tissue>
    </source>
</reference>
<reference key="5">
    <citation type="journal article" date="2015" name="Nat. Commun.">
        <title>FUS regulates AMPA receptor function and FTLD/ALS-associated behaviour via GluA1 mRNA stabilization.</title>
        <authorList>
            <person name="Udagawa T."/>
            <person name="Fujioka Y."/>
            <person name="Tanaka M."/>
            <person name="Honda D."/>
            <person name="Yokoi S."/>
            <person name="Riku Y."/>
            <person name="Ibi D."/>
            <person name="Nagai T."/>
            <person name="Yamada K."/>
            <person name="Watanabe H."/>
            <person name="Katsuno M."/>
            <person name="Inada T."/>
            <person name="Ohno K."/>
            <person name="Sokabe M."/>
            <person name="Okado H."/>
            <person name="Ishigaki S."/>
            <person name="Sobue G."/>
        </authorList>
    </citation>
    <scope>FUNCTION</scope>
    <scope>RNA-BINDING</scope>
</reference>
<protein>
    <recommendedName>
        <fullName>RNA-binding protein FUS</fullName>
    </recommendedName>
    <alternativeName>
        <fullName>Protein pigpen</fullName>
    </alternativeName>
</protein>
<organism>
    <name type="scientific">Mus musculus</name>
    <name type="common">Mouse</name>
    <dbReference type="NCBI Taxonomy" id="10090"/>
    <lineage>
        <taxon>Eukaryota</taxon>
        <taxon>Metazoa</taxon>
        <taxon>Chordata</taxon>
        <taxon>Craniata</taxon>
        <taxon>Vertebrata</taxon>
        <taxon>Euteleostomi</taxon>
        <taxon>Mammalia</taxon>
        <taxon>Eutheria</taxon>
        <taxon>Euarchontoglires</taxon>
        <taxon>Glires</taxon>
        <taxon>Rodentia</taxon>
        <taxon>Myomorpha</taxon>
        <taxon>Muroidea</taxon>
        <taxon>Muridae</taxon>
        <taxon>Murinae</taxon>
        <taxon>Mus</taxon>
        <taxon>Mus</taxon>
    </lineage>
</organism>
<name>FUS_MOUSE</name>
<dbReference type="EMBL" id="AF224264">
    <property type="protein sequence ID" value="AAF70602.1"/>
    <property type="molecule type" value="mRNA"/>
</dbReference>
<dbReference type="CCDS" id="CCDS21886.1"/>
<dbReference type="RefSeq" id="NP_631888.1">
    <property type="nucleotide sequence ID" value="NM_139149.2"/>
</dbReference>
<dbReference type="BMRB" id="P56959"/>
<dbReference type="SMR" id="P56959"/>
<dbReference type="BioGRID" id="231475">
    <property type="interactions" value="117"/>
</dbReference>
<dbReference type="CORUM" id="P56959"/>
<dbReference type="FunCoup" id="P56959">
    <property type="interactions" value="2645"/>
</dbReference>
<dbReference type="IntAct" id="P56959">
    <property type="interactions" value="61"/>
</dbReference>
<dbReference type="MINT" id="P56959"/>
<dbReference type="STRING" id="10090.ENSMUSP00000101858"/>
<dbReference type="GlyGen" id="P56959">
    <property type="glycosylation" value="2 sites, 1 N-linked glycan (1 site), 1 O-linked glycan (1 site)"/>
</dbReference>
<dbReference type="iPTMnet" id="P56959"/>
<dbReference type="PhosphoSitePlus" id="P56959"/>
<dbReference type="SwissPalm" id="P56959"/>
<dbReference type="jPOST" id="P56959"/>
<dbReference type="PaxDb" id="10090-ENSMUSP00000101858"/>
<dbReference type="PeptideAtlas" id="P56959"/>
<dbReference type="ProteomicsDB" id="273014"/>
<dbReference type="Pumba" id="P56959"/>
<dbReference type="Antibodypedia" id="1307">
    <property type="antibodies" value="481 antibodies from 38 providers"/>
</dbReference>
<dbReference type="DNASU" id="233908"/>
<dbReference type="Ensembl" id="ENSMUST00000106251.10">
    <property type="protein sequence ID" value="ENSMUSP00000101858.4"/>
    <property type="gene ID" value="ENSMUSG00000030795.19"/>
</dbReference>
<dbReference type="GeneID" id="233908"/>
<dbReference type="KEGG" id="mmu:233908"/>
<dbReference type="UCSC" id="uc009jxo.1">
    <property type="organism name" value="mouse"/>
</dbReference>
<dbReference type="AGR" id="MGI:1353633"/>
<dbReference type="CTD" id="2521"/>
<dbReference type="MGI" id="MGI:1353633">
    <property type="gene designation" value="Fus"/>
</dbReference>
<dbReference type="VEuPathDB" id="HostDB:ENSMUSG00000030795"/>
<dbReference type="eggNOG" id="KOG1995">
    <property type="taxonomic scope" value="Eukaryota"/>
</dbReference>
<dbReference type="GeneTree" id="ENSGT00940000157290"/>
<dbReference type="HOGENOM" id="CLU_025609_2_0_1"/>
<dbReference type="InParanoid" id="P56959"/>
<dbReference type="OMA" id="SYSKGPM"/>
<dbReference type="OrthoDB" id="76445at2759"/>
<dbReference type="PhylomeDB" id="P56959"/>
<dbReference type="TreeFam" id="TF322599"/>
<dbReference type="Reactome" id="R-MMU-72163">
    <property type="pathway name" value="mRNA Splicing - Major Pathway"/>
</dbReference>
<dbReference type="Reactome" id="R-MMU-72203">
    <property type="pathway name" value="Processing of Capped Intron-Containing Pre-mRNA"/>
</dbReference>
<dbReference type="BioGRID-ORCS" id="233908">
    <property type="hits" value="9 hits in 85 CRISPR screens"/>
</dbReference>
<dbReference type="CD-CODE" id="3521A8E2">
    <property type="entry name" value="Synthetic Condensate 000312"/>
</dbReference>
<dbReference type="CD-CODE" id="BC554416">
    <property type="entry name" value="Synthetic Condensate 000308"/>
</dbReference>
<dbReference type="CD-CODE" id="D12E4DB9">
    <property type="entry name" value="Stress granule"/>
</dbReference>
<dbReference type="ChiTaRS" id="Fus">
    <property type="organism name" value="mouse"/>
</dbReference>
<dbReference type="PRO" id="PR:P56959"/>
<dbReference type="Proteomes" id="UP000000589">
    <property type="component" value="Chromosome 7"/>
</dbReference>
<dbReference type="RNAct" id="P56959">
    <property type="molecule type" value="protein"/>
</dbReference>
<dbReference type="Bgee" id="ENSMUSG00000030795">
    <property type="expression patterns" value="Expressed in somite and 277 other cell types or tissues"/>
</dbReference>
<dbReference type="ExpressionAtlas" id="P56959">
    <property type="expression patterns" value="baseline and differential"/>
</dbReference>
<dbReference type="GO" id="GO:0005737">
    <property type="term" value="C:cytoplasm"/>
    <property type="evidence" value="ECO:0000314"/>
    <property type="project" value="MGI"/>
</dbReference>
<dbReference type="GO" id="GO:0098982">
    <property type="term" value="C:GABA-ergic synapse"/>
    <property type="evidence" value="ECO:0000314"/>
    <property type="project" value="SynGO"/>
</dbReference>
<dbReference type="GO" id="GO:0098978">
    <property type="term" value="C:glutamatergic synapse"/>
    <property type="evidence" value="ECO:0000314"/>
    <property type="project" value="SynGO"/>
</dbReference>
<dbReference type="GO" id="GO:0043232">
    <property type="term" value="C:intracellular membraneless organelle"/>
    <property type="evidence" value="ECO:0007669"/>
    <property type="project" value="Ensembl"/>
</dbReference>
<dbReference type="GO" id="GO:0005654">
    <property type="term" value="C:nucleoplasm"/>
    <property type="evidence" value="ECO:0007669"/>
    <property type="project" value="Ensembl"/>
</dbReference>
<dbReference type="GO" id="GO:0005634">
    <property type="term" value="C:nucleus"/>
    <property type="evidence" value="ECO:0000314"/>
    <property type="project" value="MGI"/>
</dbReference>
<dbReference type="GO" id="GO:0099524">
    <property type="term" value="C:postsynaptic cytosol"/>
    <property type="evidence" value="ECO:0000314"/>
    <property type="project" value="SynGO"/>
</dbReference>
<dbReference type="GO" id="GO:0099523">
    <property type="term" value="C:presynaptic cytosol"/>
    <property type="evidence" value="ECO:0000314"/>
    <property type="project" value="SynGO"/>
</dbReference>
<dbReference type="GO" id="GO:0003682">
    <property type="term" value="F:chromatin binding"/>
    <property type="evidence" value="ECO:0007669"/>
    <property type="project" value="Ensembl"/>
</dbReference>
<dbReference type="GO" id="GO:0003677">
    <property type="term" value="F:DNA binding"/>
    <property type="evidence" value="ECO:0007669"/>
    <property type="project" value="UniProtKB-KW"/>
</dbReference>
<dbReference type="GO" id="GO:0042802">
    <property type="term" value="F:identical protein binding"/>
    <property type="evidence" value="ECO:0007669"/>
    <property type="project" value="Ensembl"/>
</dbReference>
<dbReference type="GO" id="GO:0140693">
    <property type="term" value="F:molecular condensate scaffold activity"/>
    <property type="evidence" value="ECO:0007669"/>
    <property type="project" value="Ensembl"/>
</dbReference>
<dbReference type="GO" id="GO:0003730">
    <property type="term" value="F:mRNA 3'-UTR binding"/>
    <property type="evidence" value="ECO:0000314"/>
    <property type="project" value="MGI"/>
</dbReference>
<dbReference type="GO" id="GO:0003723">
    <property type="term" value="F:RNA binding"/>
    <property type="evidence" value="ECO:0000314"/>
    <property type="project" value="MGI"/>
</dbReference>
<dbReference type="GO" id="GO:0003713">
    <property type="term" value="F:transcription coactivator activity"/>
    <property type="evidence" value="ECO:0007669"/>
    <property type="project" value="Ensembl"/>
</dbReference>
<dbReference type="GO" id="GO:0008270">
    <property type="term" value="F:zinc ion binding"/>
    <property type="evidence" value="ECO:0007669"/>
    <property type="project" value="UniProtKB-KW"/>
</dbReference>
<dbReference type="GO" id="GO:1990000">
    <property type="term" value="P:amyloid fibril formation"/>
    <property type="evidence" value="ECO:0007669"/>
    <property type="project" value="Ensembl"/>
</dbReference>
<dbReference type="GO" id="GO:0010467">
    <property type="term" value="P:gene expression"/>
    <property type="evidence" value="ECO:0000315"/>
    <property type="project" value="MGI"/>
</dbReference>
<dbReference type="GO" id="GO:0140694">
    <property type="term" value="P:membraneless organelle assembly"/>
    <property type="evidence" value="ECO:0007669"/>
    <property type="project" value="Ensembl"/>
</dbReference>
<dbReference type="GO" id="GO:0048255">
    <property type="term" value="P:mRNA stabilization"/>
    <property type="evidence" value="ECO:0000266"/>
    <property type="project" value="MGI"/>
</dbReference>
<dbReference type="GO" id="GO:1905168">
    <property type="term" value="P:positive regulation of double-strand break repair via homologous recombination"/>
    <property type="evidence" value="ECO:0007669"/>
    <property type="project" value="Ensembl"/>
</dbReference>
<dbReference type="GO" id="GO:0051260">
    <property type="term" value="P:protein homooligomerization"/>
    <property type="evidence" value="ECO:0007669"/>
    <property type="project" value="Ensembl"/>
</dbReference>
<dbReference type="GO" id="GO:0043484">
    <property type="term" value="P:regulation of RNA splicing"/>
    <property type="evidence" value="ECO:0007669"/>
    <property type="project" value="Ensembl"/>
</dbReference>
<dbReference type="GO" id="GO:0006357">
    <property type="term" value="P:regulation of transcription by RNA polymerase II"/>
    <property type="evidence" value="ECO:0007669"/>
    <property type="project" value="Ensembl"/>
</dbReference>
<dbReference type="GO" id="GO:0008380">
    <property type="term" value="P:RNA splicing"/>
    <property type="evidence" value="ECO:0000315"/>
    <property type="project" value="MGI"/>
</dbReference>
<dbReference type="CDD" id="cd12535">
    <property type="entry name" value="RRM_FUS_TAF15"/>
    <property type="match status" value="1"/>
</dbReference>
<dbReference type="FunFam" id="4.10.1060.10:FF:000002">
    <property type="entry name" value="RNA-binding protein EWS isoform 1"/>
    <property type="match status" value="1"/>
</dbReference>
<dbReference type="FunFam" id="3.30.70.330:FF:000242">
    <property type="entry name" value="RNA-binding protein FUS isoform X1"/>
    <property type="match status" value="1"/>
</dbReference>
<dbReference type="Gene3D" id="3.30.70.330">
    <property type="match status" value="1"/>
</dbReference>
<dbReference type="Gene3D" id="4.10.1060.10">
    <property type="entry name" value="Zinc finger, RanBP2-type"/>
    <property type="match status" value="1"/>
</dbReference>
<dbReference type="InterPro" id="IPR012677">
    <property type="entry name" value="Nucleotide-bd_a/b_plait_sf"/>
</dbReference>
<dbReference type="InterPro" id="IPR035979">
    <property type="entry name" value="RBD_domain_sf"/>
</dbReference>
<dbReference type="InterPro" id="IPR000504">
    <property type="entry name" value="RRM_dom"/>
</dbReference>
<dbReference type="InterPro" id="IPR034870">
    <property type="entry name" value="TET_fam"/>
</dbReference>
<dbReference type="InterPro" id="IPR001876">
    <property type="entry name" value="Znf_RanBP2"/>
</dbReference>
<dbReference type="InterPro" id="IPR036443">
    <property type="entry name" value="Znf_RanBP2_sf"/>
</dbReference>
<dbReference type="PANTHER" id="PTHR23238">
    <property type="entry name" value="RNA BINDING PROTEIN"/>
    <property type="match status" value="1"/>
</dbReference>
<dbReference type="Pfam" id="PF00076">
    <property type="entry name" value="RRM_1"/>
    <property type="match status" value="1"/>
</dbReference>
<dbReference type="Pfam" id="PF00641">
    <property type="entry name" value="Zn_ribbon_RanBP"/>
    <property type="match status" value="1"/>
</dbReference>
<dbReference type="SMART" id="SM00360">
    <property type="entry name" value="RRM"/>
    <property type="match status" value="1"/>
</dbReference>
<dbReference type="SMART" id="SM00547">
    <property type="entry name" value="ZnF_RBZ"/>
    <property type="match status" value="1"/>
</dbReference>
<dbReference type="SUPFAM" id="SSF90209">
    <property type="entry name" value="Ran binding protein zinc finger-like"/>
    <property type="match status" value="1"/>
</dbReference>
<dbReference type="SUPFAM" id="SSF54928">
    <property type="entry name" value="RNA-binding domain, RBD"/>
    <property type="match status" value="1"/>
</dbReference>
<dbReference type="PROSITE" id="PS50102">
    <property type="entry name" value="RRM"/>
    <property type="match status" value="1"/>
</dbReference>
<dbReference type="PROSITE" id="PS01358">
    <property type="entry name" value="ZF_RANBP2_1"/>
    <property type="match status" value="1"/>
</dbReference>
<dbReference type="PROSITE" id="PS50199">
    <property type="entry name" value="ZF_RANBP2_2"/>
    <property type="match status" value="1"/>
</dbReference>
<evidence type="ECO:0000250" key="1">
    <source>
        <dbReference type="UniProtKB" id="P35637"/>
    </source>
</evidence>
<evidence type="ECO:0000255" key="2">
    <source>
        <dbReference type="PROSITE-ProRule" id="PRU00176"/>
    </source>
</evidence>
<evidence type="ECO:0000255" key="3">
    <source>
        <dbReference type="PROSITE-ProRule" id="PRU00322"/>
    </source>
</evidence>
<evidence type="ECO:0000256" key="4">
    <source>
        <dbReference type="SAM" id="MobiDB-lite"/>
    </source>
</evidence>
<evidence type="ECO:0000269" key="5">
    <source>
    </source>
</evidence>
<evidence type="ECO:0000269" key="6">
    <source>
    </source>
</evidence>
<evidence type="ECO:0000305" key="7"/>
<evidence type="ECO:0007744" key="8">
    <source>
    </source>
</evidence>
<sequence length="518" mass="52673">MASNDYTQQATQSYGAYPTQPGQGYSQQSSQPYGQQSYSGYGQSADTSGYGQSSYGSSYGQTQNTGYGTQSAPQGYGSTGGYGSSQSSQSSYGQQSSYPGYGQQPAPSSTSGSYGGSSQSSSYGQPQSGGYGQQSGYGGQQQSYGQQQSSYNPPQGYGQQNQYNSSSGGGGGGGGGNYGQDQSSMSGGGGGGGYGNQDQSGGGGGGYGGGQQDRGGRGRGGGGGYNRSSGGYEPRGRGGGRGGRGGMGGSDRGGFNKFGGPRDQGSRHDSEQDNSDNNTIFVQGLGENVTIESVADYFKQIGIIKTNKKTGQPMINLYTDRETGKLKGEATVSFDDPPSAKAAIDWFDGKEFSGNPIKVSFATRRADFNRGGGNGRGGRGRGGPMGRGGYGGGGSGGGGRGGFPSGGGGGGGQQRAGDWKCPNPTCENMNFSWRNECNQCKAPKPDGPGGGPGGSHMGGNYGDDRRGRGGYDRGGYRGRGGDRGGFRGGRGGGDRGGFGPGKMDSRGEHRQDRRERPY</sequence>
<accession>P56959</accession>
<comment type="function">
    <text evidence="1 5 6">DNA/RNA-binding protein that plays a role in various cellular processes such as transcription regulation, RNA splicing, RNA transport, DNA repair and damage response. Binds to ssRNA containing the consensus sequence 5'-AGGUAA-3' (By similarity). Binds to nascent pre-mRNAs and acts as a molecular mediator between RNA polymerase II and U1 small nuclear ribonucleoprotein thereby coupling transcription and splicing. Also binds its own pre-mRNA and autoregulates its expression; this autoregulation mechanism is mediated by non-sense-mediated decay. Plays a role in DNA repair mechanisms by promoting D-loop formation and homologous recombination during DNA double-strand break repair (By similarity). In neuronal cells, plays crucial roles in dendritic spine formation and stability, RNA transport, mRNA stability and synaptic homeostasis (PubMed:16317045, PubMed:25968143).</text>
</comment>
<comment type="subunit">
    <text evidence="1">Self-oligomerizes (via N-terminal region). Oligomerization is essential for chromatin binding. Component of nuclear riboprotein complexes. Interacts with ILF3, TDRD3 and SF1. Interacts through its C-terminus with SFRS13A. Interacts with OTUB1 and SARNP. Interacts with LRSAM1. Interacts with SAFB1 in a DNA-dependent manner; this interaction tethers FUS to chromatin. Interacts with MATR3. Interacts with SNRNP70 and POLR2A; these interactions couple RNA transcription and splicing. Interacts (through its RNA-binding domain) with RALY (through its RNA-binding domain); both are components of the same RNPs.</text>
</comment>
<comment type="interaction">
    <interactant intactId="EBI-400452">
        <id>P56959</id>
    </interactant>
    <interactant intactId="EBI-309807">
        <id>P97801</id>
        <label>Smn1</label>
    </interactant>
    <organismsDiffer>false</organismsDiffer>
    <experiments>4</experiments>
</comment>
<comment type="interaction">
    <interactant intactId="EBI-400452">
        <id>P56959</id>
    </interactant>
    <interactant intactId="EBI-720984">
        <id>Q6UWE0</id>
        <label>LRSAM1</label>
    </interactant>
    <organismsDiffer>true</organismsDiffer>
    <experiments>2</experiments>
</comment>
<comment type="subcellular location">
    <subcellularLocation>
        <location evidence="1">Nucleus</location>
    </subcellularLocation>
    <text evidence="1">Displays a punctate pattern inside the nucleus and is excluded from nucleoli.</text>
</comment>
<comment type="PTM">
    <text evidence="1">Phosphorylated in its N-terminal serine residues upon induced DNA damage. ATM and DNA-PK are able to phosphorylate FUS N-terminal region.</text>
</comment>
<comment type="similarity">
    <text evidence="7">Belongs to the RRM TET family.</text>
</comment>
<feature type="chain" id="PRO_0000081592" description="RNA-binding protein FUS">
    <location>
        <begin position="1"/>
        <end position="518"/>
    </location>
</feature>
<feature type="domain" description="RRM" evidence="2">
    <location>
        <begin position="278"/>
        <end position="364"/>
    </location>
</feature>
<feature type="zinc finger region" description="RanBP2-type" evidence="3">
    <location>
        <begin position="415"/>
        <end position="446"/>
    </location>
</feature>
<feature type="region of interest" description="Disordered" evidence="4">
    <location>
        <begin position="1"/>
        <end position="279"/>
    </location>
</feature>
<feature type="region of interest" description="Disordered" evidence="4">
    <location>
        <begin position="368"/>
        <end position="417"/>
    </location>
</feature>
<feature type="region of interest" description="Disordered" evidence="4">
    <location>
        <begin position="437"/>
        <end position="518"/>
    </location>
</feature>
<feature type="compositionally biased region" description="Polar residues" evidence="4">
    <location>
        <begin position="1"/>
        <end position="14"/>
    </location>
</feature>
<feature type="compositionally biased region" description="Low complexity" evidence="4">
    <location>
        <begin position="20"/>
        <end position="63"/>
    </location>
</feature>
<feature type="compositionally biased region" description="Low complexity" evidence="4">
    <location>
        <begin position="84"/>
        <end position="105"/>
    </location>
</feature>
<feature type="compositionally biased region" description="Low complexity" evidence="4">
    <location>
        <begin position="116"/>
        <end position="126"/>
    </location>
</feature>
<feature type="compositionally biased region" description="Gly residues" evidence="4">
    <location>
        <begin position="127"/>
        <end position="139"/>
    </location>
</feature>
<feature type="compositionally biased region" description="Low complexity" evidence="4">
    <location>
        <begin position="140"/>
        <end position="166"/>
    </location>
</feature>
<feature type="compositionally biased region" description="Gly residues" evidence="4">
    <location>
        <begin position="167"/>
        <end position="178"/>
    </location>
</feature>
<feature type="compositionally biased region" description="Gly residues" evidence="4">
    <location>
        <begin position="186"/>
        <end position="225"/>
    </location>
</feature>
<feature type="compositionally biased region" description="Gly residues" evidence="4">
    <location>
        <begin position="237"/>
        <end position="252"/>
    </location>
</feature>
<feature type="compositionally biased region" description="Gly residues" evidence="4">
    <location>
        <begin position="370"/>
        <end position="414"/>
    </location>
</feature>
<feature type="compositionally biased region" description="Gly residues" evidence="4">
    <location>
        <begin position="447"/>
        <end position="461"/>
    </location>
</feature>
<feature type="compositionally biased region" description="Basic and acidic residues" evidence="4">
    <location>
        <begin position="462"/>
        <end position="485"/>
    </location>
</feature>
<feature type="compositionally biased region" description="Gly residues" evidence="4">
    <location>
        <begin position="486"/>
        <end position="500"/>
    </location>
</feature>
<feature type="compositionally biased region" description="Basic and acidic residues" evidence="4">
    <location>
        <begin position="503"/>
        <end position="518"/>
    </location>
</feature>
<feature type="modified residue" description="Asymmetric dimethylarginine; alternate" evidence="1">
    <location>
        <position position="217"/>
    </location>
</feature>
<feature type="modified residue" description="Omega-N-methylarginine; alternate" evidence="1">
    <location>
        <position position="217"/>
    </location>
</feature>
<feature type="modified residue" description="Asymmetric dimethylarginine; alternate" evidence="1">
    <location>
        <position position="219"/>
    </location>
</feature>
<feature type="modified residue" description="Omega-N-methylarginine; alternate" evidence="1">
    <location>
        <position position="219"/>
    </location>
</feature>
<feature type="modified residue" description="Asymmetric dimethylarginine" evidence="1">
    <location>
        <position position="235"/>
    </location>
</feature>
<feature type="modified residue" description="Asymmetric dimethylarginine" evidence="1">
    <location>
        <position position="237"/>
    </location>
</feature>
<feature type="modified residue" description="Asymmetric dimethylarginine" evidence="1">
    <location>
        <position position="241"/>
    </location>
</feature>
<feature type="modified residue" description="Asymmetric dimethylarginine" evidence="1">
    <location>
        <position position="244"/>
    </location>
</feature>
<feature type="modified residue" description="Asymmetric dimethylarginine" evidence="1">
    <location>
        <position position="252"/>
    </location>
</feature>
<feature type="modified residue" description="Phosphoserine" evidence="1">
    <location>
        <position position="270"/>
    </location>
</feature>
<feature type="modified residue" description="Phosphothreonine" evidence="1">
    <location>
        <position position="279"/>
    </location>
</feature>
<feature type="modified residue" description="Phosphoserine" evidence="1">
    <location>
        <position position="333"/>
    </location>
</feature>
<feature type="modified residue" description="Asymmetric dimethylarginine" evidence="1">
    <location>
        <position position="370"/>
    </location>
</feature>
<feature type="modified residue" description="Asymmetric dimethylarginine" evidence="1">
    <location>
        <position position="376"/>
    </location>
</feature>
<feature type="modified residue" description="Asymmetric dimethylarginine" evidence="1">
    <location>
        <position position="379"/>
    </location>
</feature>
<feature type="modified residue" description="Asymmetric dimethylarginine" evidence="1">
    <location>
        <position position="381"/>
    </location>
</feature>
<feature type="modified residue" description="Asymmetric dimethylarginine" evidence="8">
    <location>
        <position position="387"/>
    </location>
</feature>
<feature type="modified residue" description="Asymmetric dimethylarginine; alternate" evidence="8">
    <location>
        <position position="400"/>
    </location>
</feature>
<feature type="modified residue" description="Omega-N-methylarginine; alternate" evidence="8">
    <location>
        <position position="400"/>
    </location>
</feature>
<feature type="modified residue" description="Asymmetric dimethylarginine" evidence="1">
    <location>
        <position position="466"/>
    </location>
</feature>
<feature type="modified residue" description="Asymmetric dimethylarginine" evidence="1">
    <location>
        <position position="468"/>
    </location>
</feature>
<feature type="modified residue" description="Asymmetric dimethylarginine" evidence="1">
    <location>
        <position position="473"/>
    </location>
</feature>
<feature type="modified residue" description="Asymmetric dimethylarginine" evidence="1">
    <location>
        <position position="477"/>
    </location>
</feature>
<feature type="modified residue" description="Asymmetric dimethylarginine" evidence="1">
    <location>
        <position position="479"/>
    </location>
</feature>
<feature type="modified residue" description="Asymmetric dimethylarginine" evidence="1">
    <location>
        <position position="483"/>
    </location>
</feature>
<feature type="modified residue" description="Asymmetric dimethylarginine" evidence="1">
    <location>
        <position position="487"/>
    </location>
</feature>
<feature type="modified residue" description="Asymmetric dimethylarginine" evidence="1">
    <location>
        <position position="490"/>
    </location>
</feature>
<feature type="modified residue" description="Asymmetric dimethylarginine; alternate" evidence="1">
    <location>
        <position position="495"/>
    </location>
</feature>
<feature type="modified residue" description="Omega-N-methylarginine; alternate" evidence="1">
    <location>
        <position position="495"/>
    </location>
</feature>
<feature type="cross-link" description="Glycyl lysine isopeptide (Lys-Gly) (interchain with G-Cter in SUMO2)" evidence="1">
    <location>
        <position position="327"/>
    </location>
</feature>
<gene>
    <name type="primary">Fus</name>
</gene>
<proteinExistence type="evidence at protein level"/>